<name>MSCL_ECOLI</name>
<organism>
    <name type="scientific">Escherichia coli (strain K12)</name>
    <dbReference type="NCBI Taxonomy" id="83333"/>
    <lineage>
        <taxon>Bacteria</taxon>
        <taxon>Pseudomonadati</taxon>
        <taxon>Pseudomonadota</taxon>
        <taxon>Gammaproteobacteria</taxon>
        <taxon>Enterobacterales</taxon>
        <taxon>Enterobacteriaceae</taxon>
        <taxon>Escherichia</taxon>
    </lineage>
</organism>
<evidence type="ECO:0000250" key="1">
    <source>
        <dbReference type="UniProtKB" id="P9WJN5"/>
    </source>
</evidence>
<evidence type="ECO:0000255" key="2">
    <source>
        <dbReference type="HAMAP-Rule" id="MF_00115"/>
    </source>
</evidence>
<evidence type="ECO:0000269" key="3">
    <source>
    </source>
</evidence>
<evidence type="ECO:0000269" key="4">
    <source>
    </source>
</evidence>
<evidence type="ECO:0000269" key="5">
    <source>
    </source>
</evidence>
<evidence type="ECO:0000269" key="6">
    <source>
    </source>
</evidence>
<evidence type="ECO:0000269" key="7">
    <source>
    </source>
</evidence>
<evidence type="ECO:0000269" key="8">
    <source>
    </source>
</evidence>
<evidence type="ECO:0000269" key="9">
    <source>
    </source>
</evidence>
<evidence type="ECO:0000269" key="10">
    <source>
    </source>
</evidence>
<evidence type="ECO:0000269" key="11">
    <source>
    </source>
</evidence>
<evidence type="ECO:0000269" key="12">
    <source>
    </source>
</evidence>
<evidence type="ECO:0000305" key="13"/>
<evidence type="ECO:0000305" key="14">
    <source>
    </source>
</evidence>
<evidence type="ECO:0000305" key="15">
    <source>
    </source>
</evidence>
<evidence type="ECO:0007829" key="16">
    <source>
        <dbReference type="PDB" id="4LKU"/>
    </source>
</evidence>
<proteinExistence type="evidence at protein level"/>
<keyword id="KW-0002">3D-structure</keyword>
<keyword id="KW-0997">Cell inner membrane</keyword>
<keyword id="KW-1003">Cell membrane</keyword>
<keyword id="KW-0903">Direct protein sequencing</keyword>
<keyword id="KW-0407">Ion channel</keyword>
<keyword id="KW-0406">Ion transport</keyword>
<keyword id="KW-0472">Membrane</keyword>
<keyword id="KW-1185">Reference proteome</keyword>
<keyword id="KW-0812">Transmembrane</keyword>
<keyword id="KW-1133">Transmembrane helix</keyword>
<keyword id="KW-0813">Transport</keyword>
<feature type="chain" id="PRO_0000192439" description="Large-conductance mechanosensitive channel">
    <location>
        <begin position="1"/>
        <end position="136"/>
    </location>
</feature>
<feature type="topological domain" description="Cytoplasmic" evidence="1">
    <location>
        <begin position="1"/>
        <end position="16"/>
    </location>
</feature>
<feature type="transmembrane region" description="Helical" evidence="1">
    <location>
        <begin position="17"/>
        <end position="45"/>
    </location>
</feature>
<feature type="topological domain" description="Periplasmic" evidence="1">
    <location>
        <begin position="46"/>
        <end position="74"/>
    </location>
</feature>
<feature type="transmembrane region" description="Helical" evidence="1">
    <location>
        <begin position="75"/>
        <end position="94"/>
    </location>
</feature>
<feature type="topological domain" description="Cytoplasmic" evidence="1">
    <location>
        <begin position="95"/>
        <end position="136"/>
    </location>
</feature>
<feature type="mutagenesis site" description="Decreases the duration of the open state of the channel and decreases mechanosensitivity." evidence="6">
    <original>I</original>
    <variation>F</variation>
    <variation>Y</variation>
    <location>
        <position position="49"/>
    </location>
</feature>
<feature type="helix" evidence="16">
    <location>
        <begin position="117"/>
        <end position="134"/>
    </location>
</feature>
<sequence>MSIIKEFREFAMRGNVVDLAVGVIIGAAFGKIVSSLVADIIMPPLGLLIGGIDFKQFAVTLRDAQGDIPAVVMHYGVFIQNVFDFLIVAFAIFMAIKLINKLNRKKEEPAAAPAPTKEEVLLTEIRDLLKEQNNRS</sequence>
<comment type="function">
    <text evidence="3 6 7 9 11">Mechanosensitive channel that opens in response to stretch forces in the membrane lipid bilayer. Forms a nonselective ion channel with a conductance of about 4 nanosiemens. Participates in the regulation of osmotic pressure changes within the cell. Opens at a pressure just below that which would cause cell disruption and death. The force required to trigger channel opening depends on the membrane lipids composition.</text>
</comment>
<comment type="subunit">
    <text evidence="2 5 8 10 12">Homopentamer.</text>
</comment>
<comment type="interaction">
    <interactant intactId="EBI-909797">
        <id>P0A742</id>
    </interactant>
    <interactant intactId="EBI-909797">
        <id>P0A742</id>
        <label>mscL</label>
    </interactant>
    <organismsDiffer>false</organismsDiffer>
    <experiments>6</experiments>
</comment>
<comment type="subcellular location">
    <subcellularLocation>
        <location evidence="2 4 6 9 10 11 14 15">Cell inner membrane</location>
        <topology evidence="2 4 10">Multi-pass membrane protein</topology>
    </subcellularLocation>
</comment>
<comment type="domain">
    <text evidence="6">The periplasmic loop between the two transmembrane domains modulates channel kinetics, and in particular the length of time the channel remains in the open conformation.</text>
</comment>
<comment type="similarity">
    <text evidence="2 13">Belongs to the MscL family.</text>
</comment>
<protein>
    <recommendedName>
        <fullName evidence="2">Large-conductance mechanosensitive channel</fullName>
    </recommendedName>
</protein>
<dbReference type="EMBL" id="U08371">
    <property type="protein sequence ID" value="AAA17745.1"/>
    <property type="molecule type" value="Unassigned_DNA"/>
</dbReference>
<dbReference type="EMBL" id="L29458">
    <property type="protein sequence ID" value="AAA24771.1"/>
    <property type="molecule type" value="Genomic_DNA"/>
</dbReference>
<dbReference type="EMBL" id="U18997">
    <property type="protein sequence ID" value="AAA58088.1"/>
    <property type="molecule type" value="Genomic_DNA"/>
</dbReference>
<dbReference type="EMBL" id="U00096">
    <property type="protein sequence ID" value="AAC76316.1"/>
    <property type="molecule type" value="Genomic_DNA"/>
</dbReference>
<dbReference type="EMBL" id="AP009048">
    <property type="protein sequence ID" value="BAE78001.1"/>
    <property type="molecule type" value="Genomic_DNA"/>
</dbReference>
<dbReference type="EMBL" id="X52114">
    <property type="protein sequence ID" value="CAA36360.1"/>
    <property type="molecule type" value="Genomic_DNA"/>
</dbReference>
<dbReference type="PIR" id="I53826">
    <property type="entry name" value="I53826"/>
</dbReference>
<dbReference type="RefSeq" id="NP_417749.1">
    <property type="nucleotide sequence ID" value="NC_000913.3"/>
</dbReference>
<dbReference type="RefSeq" id="WP_000022442.1">
    <property type="nucleotide sequence ID" value="NZ_STEB01000038.1"/>
</dbReference>
<dbReference type="PDB" id="4LKU">
    <property type="method" value="X-ray"/>
    <property type="resolution" value="1.45 A"/>
    <property type="chains" value="A/B/C/D/E=108-136"/>
</dbReference>
<dbReference type="PDBsum" id="4LKU"/>
<dbReference type="SMR" id="P0A742"/>
<dbReference type="BioGRID" id="4263415">
    <property type="interactions" value="381"/>
</dbReference>
<dbReference type="DIP" id="DIP-29827N"/>
<dbReference type="FunCoup" id="P0A742">
    <property type="interactions" value="478"/>
</dbReference>
<dbReference type="MINT" id="P0A742"/>
<dbReference type="STRING" id="511145.b3291"/>
<dbReference type="TCDB" id="1.A.22.1.1">
    <property type="family name" value="the large conductance mechanosensitive ion channel (mscl) family"/>
</dbReference>
<dbReference type="jPOST" id="P0A742"/>
<dbReference type="PaxDb" id="511145-b3291"/>
<dbReference type="EnsemblBacteria" id="AAC76316">
    <property type="protein sequence ID" value="AAC76316"/>
    <property type="gene ID" value="b3291"/>
</dbReference>
<dbReference type="GeneID" id="75173461"/>
<dbReference type="GeneID" id="947787"/>
<dbReference type="KEGG" id="ecj:JW3252"/>
<dbReference type="KEGG" id="eco:b3291"/>
<dbReference type="KEGG" id="ecoc:C3026_17890"/>
<dbReference type="PATRIC" id="fig|1411691.4.peg.3441"/>
<dbReference type="EchoBASE" id="EB1167"/>
<dbReference type="eggNOG" id="COG1970">
    <property type="taxonomic scope" value="Bacteria"/>
</dbReference>
<dbReference type="HOGENOM" id="CLU_095787_0_0_6"/>
<dbReference type="InParanoid" id="P0A742"/>
<dbReference type="OMA" id="FKTFAMR"/>
<dbReference type="OrthoDB" id="9810350at2"/>
<dbReference type="PhylomeDB" id="P0A742"/>
<dbReference type="BioCyc" id="EcoCyc:EG11180-MONOMER"/>
<dbReference type="BioCyc" id="MetaCyc:EG11180-MONOMER"/>
<dbReference type="EvolutionaryTrace" id="P0A742"/>
<dbReference type="PRO" id="PR:P0A742"/>
<dbReference type="Proteomes" id="UP000000625">
    <property type="component" value="Chromosome"/>
</dbReference>
<dbReference type="GO" id="GO:0016020">
    <property type="term" value="C:membrane"/>
    <property type="evidence" value="ECO:0007005"/>
    <property type="project" value="UniProtKB"/>
</dbReference>
<dbReference type="GO" id="GO:0005886">
    <property type="term" value="C:plasma membrane"/>
    <property type="evidence" value="ECO:0000314"/>
    <property type="project" value="EcoCyc"/>
</dbReference>
<dbReference type="GO" id="GO:0042802">
    <property type="term" value="F:identical protein binding"/>
    <property type="evidence" value="ECO:0000314"/>
    <property type="project" value="EcoCyc"/>
</dbReference>
<dbReference type="GO" id="GO:0008381">
    <property type="term" value="F:mechanosensitive monoatomic ion channel activity"/>
    <property type="evidence" value="ECO:0000314"/>
    <property type="project" value="EcoCyc"/>
</dbReference>
<dbReference type="GO" id="GO:0009992">
    <property type="term" value="P:intracellular water homeostasis"/>
    <property type="evidence" value="ECO:0000269"/>
    <property type="project" value="EcoCyc"/>
</dbReference>
<dbReference type="GO" id="GO:0034220">
    <property type="term" value="P:monoatomic ion transmembrane transport"/>
    <property type="evidence" value="ECO:0000314"/>
    <property type="project" value="EcoCyc"/>
</dbReference>
<dbReference type="GO" id="GO:0006811">
    <property type="term" value="P:monoatomic ion transport"/>
    <property type="evidence" value="ECO:0000314"/>
    <property type="project" value="EcoliWiki"/>
</dbReference>
<dbReference type="FunFam" id="1.10.1200.120:FF:000001">
    <property type="entry name" value="Large-conductance mechanosensitive channel"/>
    <property type="match status" value="1"/>
</dbReference>
<dbReference type="Gene3D" id="1.10.1200.120">
    <property type="entry name" value="Large-conductance mechanosensitive channel, MscL, domain 1"/>
    <property type="match status" value="1"/>
</dbReference>
<dbReference type="HAMAP" id="MF_00115">
    <property type="entry name" value="MscL"/>
    <property type="match status" value="1"/>
</dbReference>
<dbReference type="InterPro" id="IPR019823">
    <property type="entry name" value="Mechanosensitive_channel_CS"/>
</dbReference>
<dbReference type="InterPro" id="IPR001185">
    <property type="entry name" value="MS_channel"/>
</dbReference>
<dbReference type="InterPro" id="IPR037673">
    <property type="entry name" value="MSC/AndL"/>
</dbReference>
<dbReference type="InterPro" id="IPR036019">
    <property type="entry name" value="MscL_channel"/>
</dbReference>
<dbReference type="NCBIfam" id="TIGR00220">
    <property type="entry name" value="mscL"/>
    <property type="match status" value="1"/>
</dbReference>
<dbReference type="NCBIfam" id="NF001841">
    <property type="entry name" value="PRK00567.1-1"/>
    <property type="match status" value="1"/>
</dbReference>
<dbReference type="NCBIfam" id="NF001843">
    <property type="entry name" value="PRK00567.1-4"/>
    <property type="match status" value="1"/>
</dbReference>
<dbReference type="PANTHER" id="PTHR30266:SF2">
    <property type="entry name" value="LARGE-CONDUCTANCE MECHANOSENSITIVE CHANNEL"/>
    <property type="match status" value="1"/>
</dbReference>
<dbReference type="PANTHER" id="PTHR30266">
    <property type="entry name" value="MECHANOSENSITIVE CHANNEL MSCL"/>
    <property type="match status" value="1"/>
</dbReference>
<dbReference type="Pfam" id="PF01741">
    <property type="entry name" value="MscL"/>
    <property type="match status" value="1"/>
</dbReference>
<dbReference type="PRINTS" id="PR01264">
    <property type="entry name" value="MECHCHANNEL"/>
</dbReference>
<dbReference type="SUPFAM" id="SSF81330">
    <property type="entry name" value="Gated mechanosensitive channel"/>
    <property type="match status" value="1"/>
</dbReference>
<dbReference type="PROSITE" id="PS01327">
    <property type="entry name" value="MSCL"/>
    <property type="match status" value="1"/>
</dbReference>
<accession>P0A742</accession>
<accession>P23867</accession>
<accession>Q2M6V5</accession>
<reference key="1">
    <citation type="journal article" date="1994" name="Nature">
        <title>A large-conductance mechanosensitive channel in E. coli encoded by mscL alone.</title>
        <authorList>
            <person name="Sukharev S.I."/>
            <person name="Blount P."/>
            <person name="Martinac B."/>
            <person name="Blattner F.R."/>
            <person name="Kung C."/>
        </authorList>
    </citation>
    <scope>NUCLEOTIDE SEQUENCE [GENOMIC DNA]</scope>
    <scope>PROTEIN SEQUENCE OF 1-37</scope>
    <scope>FUNCTION</scope>
    <scope>SUBCELLULAR LOCATION</scope>
</reference>
<reference key="2">
    <citation type="journal article" date="1994" name="Gene">
        <title>A merR homologue at 74 minutes on the Escherichia coli genome.</title>
        <authorList>
            <person name="Christie G.E."/>
            <person name="White T.J."/>
            <person name="Goodwin T.S."/>
        </authorList>
    </citation>
    <scope>NUCLEOTIDE SEQUENCE [GENOMIC DNA]</scope>
</reference>
<reference key="3">
    <citation type="journal article" date="1997" name="Science">
        <title>The complete genome sequence of Escherichia coli K-12.</title>
        <authorList>
            <person name="Blattner F.R."/>
            <person name="Plunkett G. III"/>
            <person name="Bloch C.A."/>
            <person name="Perna N.T."/>
            <person name="Burland V."/>
            <person name="Riley M."/>
            <person name="Collado-Vides J."/>
            <person name="Glasner J.D."/>
            <person name="Rode C.K."/>
            <person name="Mayhew G.F."/>
            <person name="Gregor J."/>
            <person name="Davis N.W."/>
            <person name="Kirkpatrick H.A."/>
            <person name="Goeden M.A."/>
            <person name="Rose D.J."/>
            <person name="Mau B."/>
            <person name="Shao Y."/>
        </authorList>
    </citation>
    <scope>NUCLEOTIDE SEQUENCE [LARGE SCALE GENOMIC DNA]</scope>
    <source>
        <strain>K12 / MG1655 / ATCC 47076</strain>
    </source>
</reference>
<reference key="4">
    <citation type="journal article" date="2006" name="Mol. Syst. Biol.">
        <title>Highly accurate genome sequences of Escherichia coli K-12 strains MG1655 and W3110.</title>
        <authorList>
            <person name="Hayashi K."/>
            <person name="Morooka N."/>
            <person name="Yamamoto Y."/>
            <person name="Fujita K."/>
            <person name="Isono K."/>
            <person name="Choi S."/>
            <person name="Ohtsubo E."/>
            <person name="Baba T."/>
            <person name="Wanner B.L."/>
            <person name="Mori H."/>
            <person name="Horiuchi T."/>
        </authorList>
    </citation>
    <scope>NUCLEOTIDE SEQUENCE [LARGE SCALE GENOMIC DNA]</scope>
    <source>
        <strain>K12 / W3110 / ATCC 27325 / DSM 5911</strain>
    </source>
</reference>
<reference key="5">
    <citation type="journal article" date="1993" name="Mol. Microbiol.">
        <title>NAD+ binding to the Escherichia coli K(+)-uptake protein TrkA and sequence similarity between TrkA and domains of a family of dehydrogenases suggest a role for NAD+ in bacterial transport.</title>
        <authorList>
            <person name="Schloesser A."/>
            <person name="Hamann A."/>
            <person name="Bossemeyer D."/>
            <person name="Schneider E."/>
            <person name="Bakker E.P."/>
        </authorList>
    </citation>
    <scope>NUCLEOTIDE SEQUENCE [GENOMIC DNA] OF 1-40</scope>
</reference>
<reference key="6">
    <citation type="journal article" date="1996" name="EMBO J.">
        <title>Membrane topology and multimeric structure of a mechanosensitive channel protein of Escherichia coli.</title>
        <authorList>
            <person name="Blount P."/>
            <person name="Sukharev S.I."/>
            <person name="Moe P.C."/>
            <person name="Schroeder M.J."/>
            <person name="Guy H.R."/>
            <person name="Kung C."/>
        </authorList>
    </citation>
    <scope>SUBCELLULAR LOCATION</scope>
    <scope>TOPOLOGY</scope>
    <scope>SUBUNIT</scope>
</reference>
<reference key="7">
    <citation type="journal article" date="1998" name="Science">
        <title>Structure of the MscL homolog from Mycobacterium tuberculosis: a gated mechanosensitive ion channel.</title>
        <authorList>
            <person name="Chang G."/>
            <person name="Spencer R.H."/>
            <person name="Lee A.T."/>
            <person name="Barclay M.T."/>
            <person name="Rees D.C."/>
        </authorList>
    </citation>
    <scope>SUBUNIT</scope>
    <scope>REVISION OF SUBUNIT NUMBER</scope>
</reference>
<reference key="8">
    <citation type="journal article" date="1998" name="Mol. Microbiol.">
        <title>Functional and structural conservation in the mechanosensitive channel mscL implicates elements crucial for mechanosensation.</title>
        <authorList>
            <person name="Moe P.C."/>
            <person name="Blount P."/>
            <person name="Kung C."/>
        </authorList>
    </citation>
    <scope>FUNCTION</scope>
    <scope>SUBCELLULAR LOCATION</scope>
</reference>
<reference key="9">
    <citation type="journal article" date="1999" name="EMBO J.">
        <title>Protection of Escherichia coli cells against extreme turgor by activation of MscS and MscL mechanosensitive channels: identification of genes required for MscS activity.</title>
        <authorList>
            <person name="Levina N."/>
            <person name="Toetemeyer S."/>
            <person name="Stokes N.R."/>
            <person name="Louis P."/>
            <person name="Jones M.A."/>
            <person name="Booth I.R."/>
        </authorList>
    </citation>
    <scope>FUNCTION</scope>
    <scope>PHYSIOLOGICAL ROLE</scope>
    <source>
        <strain>K12 / MJF379</strain>
    </source>
</reference>
<reference key="10">
    <citation type="journal article" date="2005" name="Science">
        <title>Global topology analysis of the Escherichia coli inner membrane proteome.</title>
        <authorList>
            <person name="Daley D.O."/>
            <person name="Rapp M."/>
            <person name="Granseth E."/>
            <person name="Melen K."/>
            <person name="Drew D."/>
            <person name="von Heijne G."/>
        </authorList>
    </citation>
    <scope>TOPOLOGY [LARGE SCALE ANALYSIS]</scope>
    <scope>SUBCELLULAR LOCATION</scope>
    <source>
        <strain>K12 / MG1655 / ATCC 47076</strain>
    </source>
</reference>
<reference key="11">
    <citation type="journal article" date="2010" name="PLoS Biol.">
        <title>S. aureus MscL is a pentamer in vivo but of variable stoichiometries in vitro: implications for detergent-solubilized membrane proteins.</title>
        <authorList>
            <person name="Dorwart M.R."/>
            <person name="Wray R."/>
            <person name="Brautigam C.A."/>
            <person name="Jiang Y."/>
            <person name="Blount P."/>
        </authorList>
    </citation>
    <scope>SUBUNIT</scope>
    <scope>SUBCELLULAR LOCATION</scope>
</reference>
<reference key="12">
    <citation type="journal article" date="2013" name="Biochemistry">
        <title>Phosphatidylinositol is crucial for the mechanosensitivity of Mycobacterium tuberculosis MscL.</title>
        <authorList>
            <person name="Zhong D."/>
            <person name="Blount P."/>
        </authorList>
    </citation>
    <scope>FUNCTION</scope>
    <scope>SUBCELLULAR LOCATION</scope>
</reference>
<reference key="13">
    <citation type="journal article" date="2013" name="Cell Rep.">
        <title>Chimeras reveal a single lipid-interface residue that controls MscL channel kinetics as well as mechanosensitivity.</title>
        <authorList>
            <person name="Yang L.M."/>
            <person name="Zhong D."/>
            <person name="Blount P."/>
        </authorList>
    </citation>
    <scope>FUNCTION</scope>
    <scope>SUBCELLULAR LOCATION</scope>
    <scope>DOMAIN</scope>
    <scope>MUTAGENESIS OF ILE-49</scope>
</reference>
<reference key="14">
    <citation type="journal article" date="2013" name="Protein Sci.">
        <title>Structure and stability of the C-terminal helical bundle of the E. coli mechanosensitive channel of large conductance.</title>
        <authorList>
            <person name="Walton T.A."/>
            <person name="Rees D.C."/>
        </authorList>
    </citation>
    <scope>X-RAY CRYSTALLOGRAPHY (1.45 ANGSTROMS) OF 108-136</scope>
    <scope>SUBUNIT</scope>
</reference>
<gene>
    <name evidence="2" type="primary">mscL</name>
    <name type="synonym">yhdC</name>
    <name type="ordered locus">b3291</name>
    <name type="ordered locus">JW3252</name>
</gene>